<reference key="1">
    <citation type="journal article" date="2011" name="Stand. Genomic Sci.">
        <title>Complete genome sequence of Rhodospirillum rubrum type strain (S1).</title>
        <authorList>
            <person name="Munk A.C."/>
            <person name="Copeland A."/>
            <person name="Lucas S."/>
            <person name="Lapidus A."/>
            <person name="Del Rio T.G."/>
            <person name="Barry K."/>
            <person name="Detter J.C."/>
            <person name="Hammon N."/>
            <person name="Israni S."/>
            <person name="Pitluck S."/>
            <person name="Brettin T."/>
            <person name="Bruce D."/>
            <person name="Han C."/>
            <person name="Tapia R."/>
            <person name="Gilna P."/>
            <person name="Schmutz J."/>
            <person name="Larimer F."/>
            <person name="Land M."/>
            <person name="Kyrpides N.C."/>
            <person name="Mavromatis K."/>
            <person name="Richardson P."/>
            <person name="Rohde M."/>
            <person name="Goeker M."/>
            <person name="Klenk H.P."/>
            <person name="Zhang Y."/>
            <person name="Roberts G.P."/>
            <person name="Reslewic S."/>
            <person name="Schwartz D.C."/>
        </authorList>
    </citation>
    <scope>NUCLEOTIDE SEQUENCE [LARGE SCALE GENOMIC DNA]</scope>
    <source>
        <strain>ATCC 11170 / ATH 1.1.1 / DSM 467 / LMG 4362 / NCIMB 8255 / S1</strain>
    </source>
</reference>
<dbReference type="EC" id="2.5.1.145" evidence="1"/>
<dbReference type="EMBL" id="CP000230">
    <property type="protein sequence ID" value="ABC21445.1"/>
    <property type="molecule type" value="Genomic_DNA"/>
</dbReference>
<dbReference type="RefSeq" id="WP_011388399.1">
    <property type="nucleotide sequence ID" value="NC_007643.1"/>
</dbReference>
<dbReference type="RefSeq" id="YP_425732.1">
    <property type="nucleotide sequence ID" value="NC_007643.1"/>
</dbReference>
<dbReference type="SMR" id="Q2RWQ0"/>
<dbReference type="STRING" id="269796.Rru_A0641"/>
<dbReference type="EnsemblBacteria" id="ABC21445">
    <property type="protein sequence ID" value="ABC21445"/>
    <property type="gene ID" value="Rru_A0641"/>
</dbReference>
<dbReference type="KEGG" id="rru:Rru_A0641"/>
<dbReference type="PATRIC" id="fig|269796.9.peg.697"/>
<dbReference type="eggNOG" id="COG0682">
    <property type="taxonomic scope" value="Bacteria"/>
</dbReference>
<dbReference type="HOGENOM" id="CLU_013386_1_0_5"/>
<dbReference type="PhylomeDB" id="Q2RWQ0"/>
<dbReference type="UniPathway" id="UPA00664"/>
<dbReference type="Proteomes" id="UP000001929">
    <property type="component" value="Chromosome"/>
</dbReference>
<dbReference type="GO" id="GO:0005886">
    <property type="term" value="C:plasma membrane"/>
    <property type="evidence" value="ECO:0007669"/>
    <property type="project" value="UniProtKB-SubCell"/>
</dbReference>
<dbReference type="GO" id="GO:0008961">
    <property type="term" value="F:phosphatidylglycerol-prolipoprotein diacylglyceryl transferase activity"/>
    <property type="evidence" value="ECO:0007669"/>
    <property type="project" value="UniProtKB-UniRule"/>
</dbReference>
<dbReference type="GO" id="GO:0042158">
    <property type="term" value="P:lipoprotein biosynthetic process"/>
    <property type="evidence" value="ECO:0007669"/>
    <property type="project" value="UniProtKB-UniRule"/>
</dbReference>
<dbReference type="HAMAP" id="MF_01147">
    <property type="entry name" value="Lgt"/>
    <property type="match status" value="1"/>
</dbReference>
<dbReference type="InterPro" id="IPR001640">
    <property type="entry name" value="Lgt"/>
</dbReference>
<dbReference type="NCBIfam" id="TIGR00544">
    <property type="entry name" value="lgt"/>
    <property type="match status" value="1"/>
</dbReference>
<dbReference type="PANTHER" id="PTHR30589:SF0">
    <property type="entry name" value="PHOSPHATIDYLGLYCEROL--PROLIPOPROTEIN DIACYLGLYCERYL TRANSFERASE"/>
    <property type="match status" value="1"/>
</dbReference>
<dbReference type="PANTHER" id="PTHR30589">
    <property type="entry name" value="PROLIPOPROTEIN DIACYLGLYCERYL TRANSFERASE"/>
    <property type="match status" value="1"/>
</dbReference>
<dbReference type="Pfam" id="PF01790">
    <property type="entry name" value="LGT"/>
    <property type="match status" value="1"/>
</dbReference>
<dbReference type="PROSITE" id="PS01311">
    <property type="entry name" value="LGT"/>
    <property type="match status" value="1"/>
</dbReference>
<evidence type="ECO:0000255" key="1">
    <source>
        <dbReference type="HAMAP-Rule" id="MF_01147"/>
    </source>
</evidence>
<name>LGT_RHORT</name>
<protein>
    <recommendedName>
        <fullName evidence="1">Phosphatidylglycerol--prolipoprotein diacylglyceryl transferase</fullName>
        <ecNumber evidence="1">2.5.1.145</ecNumber>
    </recommendedName>
</protein>
<organism>
    <name type="scientific">Rhodospirillum rubrum (strain ATCC 11170 / ATH 1.1.1 / DSM 467 / LMG 4362 / NCIMB 8255 / S1)</name>
    <dbReference type="NCBI Taxonomy" id="269796"/>
    <lineage>
        <taxon>Bacteria</taxon>
        <taxon>Pseudomonadati</taxon>
        <taxon>Pseudomonadota</taxon>
        <taxon>Alphaproteobacteria</taxon>
        <taxon>Rhodospirillales</taxon>
        <taxon>Rhodospirillaceae</taxon>
        <taxon>Rhodospirillum</taxon>
    </lineage>
</organism>
<feature type="chain" id="PRO_1000053487" description="Phosphatidylglycerol--prolipoprotein diacylglyceryl transferase">
    <location>
        <begin position="1"/>
        <end position="274"/>
    </location>
</feature>
<feature type="transmembrane region" description="Helical" evidence="1">
    <location>
        <begin position="24"/>
        <end position="44"/>
    </location>
</feature>
<feature type="transmembrane region" description="Helical" evidence="1">
    <location>
        <begin position="60"/>
        <end position="80"/>
    </location>
</feature>
<feature type="transmembrane region" description="Helical" evidence="1">
    <location>
        <begin position="96"/>
        <end position="116"/>
    </location>
</feature>
<feature type="transmembrane region" description="Helical" evidence="1">
    <location>
        <begin position="122"/>
        <end position="142"/>
    </location>
</feature>
<feature type="transmembrane region" description="Helical" evidence="1">
    <location>
        <begin position="182"/>
        <end position="202"/>
    </location>
</feature>
<feature type="transmembrane region" description="Helical" evidence="1">
    <location>
        <begin position="207"/>
        <end position="227"/>
    </location>
</feature>
<feature type="transmembrane region" description="Helical" evidence="1">
    <location>
        <begin position="241"/>
        <end position="261"/>
    </location>
</feature>
<feature type="binding site" evidence="1">
    <location>
        <position position="143"/>
    </location>
    <ligand>
        <name>a 1,2-diacyl-sn-glycero-3-phospho-(1'-sn-glycerol)</name>
        <dbReference type="ChEBI" id="CHEBI:64716"/>
    </ligand>
</feature>
<accession>Q2RWQ0</accession>
<keyword id="KW-0997">Cell inner membrane</keyword>
<keyword id="KW-1003">Cell membrane</keyword>
<keyword id="KW-0472">Membrane</keyword>
<keyword id="KW-1185">Reference proteome</keyword>
<keyword id="KW-0808">Transferase</keyword>
<keyword id="KW-0812">Transmembrane</keyword>
<keyword id="KW-1133">Transmembrane helix</keyword>
<proteinExistence type="inferred from homology"/>
<comment type="function">
    <text evidence="1">Catalyzes the transfer of the diacylglyceryl group from phosphatidylglycerol to the sulfhydryl group of the N-terminal cysteine of a prolipoprotein, the first step in the formation of mature lipoproteins.</text>
</comment>
<comment type="catalytic activity">
    <reaction evidence="1">
        <text>L-cysteinyl-[prolipoprotein] + a 1,2-diacyl-sn-glycero-3-phospho-(1'-sn-glycerol) = an S-1,2-diacyl-sn-glyceryl-L-cysteinyl-[prolipoprotein] + sn-glycerol 1-phosphate + H(+)</text>
        <dbReference type="Rhea" id="RHEA:56712"/>
        <dbReference type="Rhea" id="RHEA-COMP:14679"/>
        <dbReference type="Rhea" id="RHEA-COMP:14680"/>
        <dbReference type="ChEBI" id="CHEBI:15378"/>
        <dbReference type="ChEBI" id="CHEBI:29950"/>
        <dbReference type="ChEBI" id="CHEBI:57685"/>
        <dbReference type="ChEBI" id="CHEBI:64716"/>
        <dbReference type="ChEBI" id="CHEBI:140658"/>
        <dbReference type="EC" id="2.5.1.145"/>
    </reaction>
</comment>
<comment type="pathway">
    <text evidence="1">Protein modification; lipoprotein biosynthesis (diacylglyceryl transfer).</text>
</comment>
<comment type="subcellular location">
    <subcellularLocation>
        <location evidence="1">Cell inner membrane</location>
        <topology evidence="1">Multi-pass membrane protein</topology>
    </subcellularLocation>
</comment>
<comment type="similarity">
    <text evidence="1">Belongs to the Lgt family.</text>
</comment>
<sequence length="274" mass="29941">MLFALPFPAIDPVLVEIGPFAIRWYALAYIVGLLGGWWYTRFLSRRSRPPVMSDADVDDLLVWATLGTILGGRLGYVVFYNAAHFLANPLEIPMLWHGGMSFHGGLVGVITATVLFCRSRRLSVARVGDLVALVAPLGLFFGRLANFINGELFGRPAPDVPWAMVFPHGGPLPRHPSQLYEATLEGLVLFCLLGLLWRFTALSRKPGQIIGLFLIGYGLSRITAEFFREPDAQIGFLALGVTMGQILSLPMILAGIVVFVVARRAKPLAVPGGR</sequence>
<gene>
    <name evidence="1" type="primary">lgt</name>
    <name type="ordered locus">Rru_A0641</name>
</gene>